<organism>
    <name type="scientific">Aspergillus oryzae (strain ATCC 42149 / RIB 40)</name>
    <name type="common">Yellow koji mold</name>
    <dbReference type="NCBI Taxonomy" id="510516"/>
    <lineage>
        <taxon>Eukaryota</taxon>
        <taxon>Fungi</taxon>
        <taxon>Dikarya</taxon>
        <taxon>Ascomycota</taxon>
        <taxon>Pezizomycotina</taxon>
        <taxon>Eurotiomycetes</taxon>
        <taxon>Eurotiomycetidae</taxon>
        <taxon>Eurotiales</taxon>
        <taxon>Aspergillaceae</taxon>
        <taxon>Aspergillus</taxon>
        <taxon>Aspergillus subgen. Circumdati</taxon>
    </lineage>
</organism>
<keyword id="KW-0119">Carbohydrate metabolism</keyword>
<keyword id="KW-1003">Cell membrane</keyword>
<keyword id="KW-0136">Cellulose degradation</keyword>
<keyword id="KW-0325">Glycoprotein</keyword>
<keyword id="KW-0326">Glycosidase</keyword>
<keyword id="KW-0378">Hydrolase</keyword>
<keyword id="KW-0472">Membrane</keyword>
<keyword id="KW-0624">Polysaccharide degradation</keyword>
<keyword id="KW-1185">Reference proteome</keyword>
<keyword id="KW-0735">Signal-anchor</keyword>
<keyword id="KW-0812">Transmembrane</keyword>
<keyword id="KW-1133">Transmembrane helix</keyword>
<comment type="function">
    <text evidence="1">Beta-glucosidases are one of a number of cellulolytic enzymes involved in the degradation of cellulosic biomass. Catalyzes the last step releasing glucose from the inhibitory cellobiose (By similarity).</text>
</comment>
<comment type="catalytic activity">
    <reaction>
        <text>Hydrolysis of terminal, non-reducing beta-D-glucosyl residues with release of beta-D-glucose.</text>
        <dbReference type="EC" id="3.2.1.21"/>
    </reaction>
</comment>
<comment type="pathway">
    <text>Glycan metabolism; cellulose degradation.</text>
</comment>
<comment type="subcellular location">
    <subcellularLocation>
        <location evidence="1">Cell membrane</location>
        <topology evidence="1">Single-pass type II membrane protein</topology>
    </subcellularLocation>
</comment>
<comment type="similarity">
    <text evidence="4">Belongs to the glycosyl hydrolase 3 family.</text>
</comment>
<comment type="sequence caution" evidence="4">
    <conflict type="erroneous gene model prediction">
        <sequence resource="EMBL-CDS" id="BAE54990"/>
    </conflict>
</comment>
<protein>
    <recommendedName>
        <fullName>Probable beta-glucosidase E</fullName>
        <ecNumber>3.2.1.21</ecNumber>
    </recommendedName>
    <alternativeName>
        <fullName>Beta-D-glucoside glucohydrolase E</fullName>
    </alternativeName>
    <alternativeName>
        <fullName>Cellobiase E</fullName>
    </alternativeName>
    <alternativeName>
        <fullName>Gentiobiase E</fullName>
    </alternativeName>
</protein>
<name>BGLE_ASPOR</name>
<accession>Q2UTX5</accession>
<reference key="1">
    <citation type="journal article" date="2005" name="Nature">
        <title>Genome sequencing and analysis of Aspergillus oryzae.</title>
        <authorList>
            <person name="Machida M."/>
            <person name="Asai K."/>
            <person name="Sano M."/>
            <person name="Tanaka T."/>
            <person name="Kumagai T."/>
            <person name="Terai G."/>
            <person name="Kusumoto K."/>
            <person name="Arima T."/>
            <person name="Akita O."/>
            <person name="Kashiwagi Y."/>
            <person name="Abe K."/>
            <person name="Gomi K."/>
            <person name="Horiuchi H."/>
            <person name="Kitamoto K."/>
            <person name="Kobayashi T."/>
            <person name="Takeuchi M."/>
            <person name="Denning D.W."/>
            <person name="Galagan J.E."/>
            <person name="Nierman W.C."/>
            <person name="Yu J."/>
            <person name="Archer D.B."/>
            <person name="Bennett J.W."/>
            <person name="Bhatnagar D."/>
            <person name="Cleveland T.E."/>
            <person name="Fedorova N.D."/>
            <person name="Gotoh O."/>
            <person name="Horikawa H."/>
            <person name="Hosoyama A."/>
            <person name="Ichinomiya M."/>
            <person name="Igarashi R."/>
            <person name="Iwashita K."/>
            <person name="Juvvadi P.R."/>
            <person name="Kato M."/>
            <person name="Kato Y."/>
            <person name="Kin T."/>
            <person name="Kokubun A."/>
            <person name="Maeda H."/>
            <person name="Maeyama N."/>
            <person name="Maruyama J."/>
            <person name="Nagasaki H."/>
            <person name="Nakajima T."/>
            <person name="Oda K."/>
            <person name="Okada K."/>
            <person name="Paulsen I."/>
            <person name="Sakamoto K."/>
            <person name="Sawano T."/>
            <person name="Takahashi M."/>
            <person name="Takase K."/>
            <person name="Terabayashi Y."/>
            <person name="Wortman J.R."/>
            <person name="Yamada O."/>
            <person name="Yamagata Y."/>
            <person name="Anazawa H."/>
            <person name="Hata Y."/>
            <person name="Koide Y."/>
            <person name="Komori T."/>
            <person name="Koyama Y."/>
            <person name="Minetoki T."/>
            <person name="Suharnan S."/>
            <person name="Tanaka A."/>
            <person name="Isono K."/>
            <person name="Kuhara S."/>
            <person name="Ogasawara N."/>
            <person name="Kikuchi H."/>
        </authorList>
    </citation>
    <scope>NUCLEOTIDE SEQUENCE [LARGE SCALE GENOMIC DNA]</scope>
    <source>
        <strain>ATCC 42149 / RIB 40</strain>
    </source>
</reference>
<proteinExistence type="inferred from homology"/>
<gene>
    <name type="primary">bglE</name>
    <name type="ORF">AO090009000554</name>
</gene>
<sequence>MPPPPFRDAPSSAKSSQRYTPLHESIPEELNDKQYSSDADSLPLSDPSDGEDDSEIRLRRVDRNGTRSNQATAYVPVVRKSGDVEAYFDSIAEAELELLSASRQYDGVDDDDDDSDGYGVGVKRGQRQGLLKRTHDGRTGWRTVYYSKYWWRALIGVVVVLVLLVLVFLGLARSKQVGDELDYSMIPAESWFPSPRGGALKEWAADYQKAALLVGNMTLIEKVNITTGTGWQMGLCVGNTGPAESVHFPSLCLQDGPMGIRYADHISAFPPGLTTGATWNRDLIRERGIAMGLEARLKGVNVLLGPSMGPLGMMPAGGRNWEAFGSDPVLQGVAAAETIKGIQSNGVMATAKHFVMNEQEHFRQPFEWGIPTALSSNVGDRALHEVFAWPFAESIRADVASVMCAYQMVNNSHACENSKLLNGILKDELGFQGFVQSDWLAQRSGINSALGGLDMSMPGDGLHWADGKSLWGSELTRAVLNTSIPMERLNDMVTRIVAAWYHLGQDQWERPPPDGEGGPNFSSWTDDQTGWWQQASVEAGDQDGGWGIVNKYVDAGAGHGDIARKVAAEGIVLVKNNNNTLPLSRSPPSPYRIGIYGDDAGPALGPNACPDRGCSQGTLASGWGSGTVEFPFLVSPLEALQGAWETEVEITPYLQNMVMPVSVQDKDLCLVFANANSGEGYIHAGGIHGDRNDLFLQKGGDTLIQAVANNCAGPTVVVVHAVGPVVVESWIDLPGVDAVLFAHLPGQESGNALVDVLFGDVDASGRLPYTVGKSLEDYGPGAQVLYENNAPVPQVDFLDALYIDYRYFDKFNITPRYEFGFGLSYTSFELSKLYIKSMQWKSRLPKSRPQDQVSPPEYDTRPPVNENVLFPEGFHALSKYVYSYLPSLDGTAAANYTEYPDGYDLPRQPSEAGGDLGGNPSLYEEMAKVQVQVANTGARAGQTVVQAYVSFPSDVVEEGDLVEVPVDEKGETVTFVPSKEQVEFPDRVLRNFTKIALEPGEKKTVEMTLSRKDLSYWSARQQNWVMPDGDFQIWVGQSSRDLPLHGKY</sequence>
<feature type="chain" id="PRO_0000394873" description="Probable beta-glucosidase E">
    <location>
        <begin position="1"/>
        <end position="1048"/>
    </location>
</feature>
<feature type="topological domain" description="Cytoplasmic" evidence="2">
    <location>
        <begin position="1"/>
        <end position="150"/>
    </location>
</feature>
<feature type="transmembrane region" description="Helical; Signal-anchor for type II membrane protein" evidence="2">
    <location>
        <begin position="151"/>
        <end position="171"/>
    </location>
</feature>
<feature type="topological domain" description="Extracellular" evidence="2">
    <location>
        <begin position="172"/>
        <end position="1048"/>
    </location>
</feature>
<feature type="region of interest" description="Disordered" evidence="3">
    <location>
        <begin position="1"/>
        <end position="54"/>
    </location>
</feature>
<feature type="region of interest" description="Disordered" evidence="3">
    <location>
        <begin position="508"/>
        <end position="527"/>
    </location>
</feature>
<feature type="compositionally biased region" description="Low complexity" evidence="3">
    <location>
        <begin position="36"/>
        <end position="47"/>
    </location>
</feature>
<feature type="active site" evidence="1">
    <location>
        <position position="438"/>
    </location>
</feature>
<feature type="glycosylation site" description="N-linked (GlcNAc...) asparagine" evidence="2">
    <location>
        <position position="216"/>
    </location>
</feature>
<feature type="glycosylation site" description="N-linked (GlcNAc...) asparagine" evidence="2">
    <location>
        <position position="224"/>
    </location>
</feature>
<feature type="glycosylation site" description="N-linked (GlcNAc...) asparagine" evidence="2">
    <location>
        <position position="410"/>
    </location>
</feature>
<feature type="glycosylation site" description="N-linked (GlcNAc...) asparagine" evidence="2">
    <location>
        <position position="481"/>
    </location>
</feature>
<feature type="glycosylation site" description="N-linked (GlcNAc...) asparagine" evidence="2">
    <location>
        <position position="520"/>
    </location>
</feature>
<feature type="glycosylation site" description="N-linked (GlcNAc...) asparagine" evidence="2">
    <location>
        <position position="578"/>
    </location>
</feature>
<feature type="glycosylation site" description="N-linked (GlcNAc...) asparagine" evidence="2">
    <location>
        <position position="895"/>
    </location>
</feature>
<feature type="glycosylation site" description="N-linked (GlcNAc...) asparagine" evidence="2">
    <location>
        <position position="991"/>
    </location>
</feature>
<evidence type="ECO:0000250" key="1"/>
<evidence type="ECO:0000255" key="2"/>
<evidence type="ECO:0000256" key="3">
    <source>
        <dbReference type="SAM" id="MobiDB-lite"/>
    </source>
</evidence>
<evidence type="ECO:0000305" key="4"/>
<dbReference type="EC" id="3.2.1.21"/>
<dbReference type="EMBL" id="BA000049">
    <property type="protein sequence ID" value="BAE54990.1"/>
    <property type="status" value="ALT_SEQ"/>
    <property type="molecule type" value="Genomic_DNA"/>
</dbReference>
<dbReference type="RefSeq" id="XP_001816992.2">
    <property type="nucleotide sequence ID" value="XM_001816940.2"/>
</dbReference>
<dbReference type="SMR" id="Q2UTX5"/>
<dbReference type="STRING" id="510516.Q2UTX5"/>
<dbReference type="CAZy" id="GH3">
    <property type="family name" value="Glycoside Hydrolase Family 3"/>
</dbReference>
<dbReference type="GlyCosmos" id="Q2UTX5">
    <property type="glycosylation" value="8 sites, No reported glycans"/>
</dbReference>
<dbReference type="EnsemblFungi" id="BAE54990">
    <property type="protein sequence ID" value="BAE54990"/>
    <property type="gene ID" value="AO090009000554"/>
</dbReference>
<dbReference type="UniPathway" id="UPA00696"/>
<dbReference type="Proteomes" id="UP000006564">
    <property type="component" value="Chromosome 1"/>
</dbReference>
<dbReference type="GO" id="GO:0005886">
    <property type="term" value="C:plasma membrane"/>
    <property type="evidence" value="ECO:0007669"/>
    <property type="project" value="UniProtKB-SubCell"/>
</dbReference>
<dbReference type="GO" id="GO:0008422">
    <property type="term" value="F:beta-glucosidase activity"/>
    <property type="evidence" value="ECO:0007669"/>
    <property type="project" value="UniProtKB-EC"/>
</dbReference>
<dbReference type="GO" id="GO:0030245">
    <property type="term" value="P:cellulose catabolic process"/>
    <property type="evidence" value="ECO:0007669"/>
    <property type="project" value="UniProtKB-UniPathway"/>
</dbReference>
<dbReference type="FunFam" id="3.20.20.300:FF:000002">
    <property type="entry name" value="Probable beta-glucosidase"/>
    <property type="match status" value="1"/>
</dbReference>
<dbReference type="FunFam" id="3.40.50.1700:FF:000003">
    <property type="entry name" value="Probable beta-glucosidase"/>
    <property type="match status" value="1"/>
</dbReference>
<dbReference type="Gene3D" id="3.40.50.1700">
    <property type="entry name" value="Glycoside hydrolase family 3 C-terminal domain"/>
    <property type="match status" value="1"/>
</dbReference>
<dbReference type="Gene3D" id="3.20.20.300">
    <property type="entry name" value="Glycoside hydrolase, family 3, N-terminal domain"/>
    <property type="match status" value="1"/>
</dbReference>
<dbReference type="Gene3D" id="2.60.40.10">
    <property type="entry name" value="Immunoglobulins"/>
    <property type="match status" value="1"/>
</dbReference>
<dbReference type="InterPro" id="IPR050288">
    <property type="entry name" value="Cellulose_deg_GH3"/>
</dbReference>
<dbReference type="InterPro" id="IPR026891">
    <property type="entry name" value="Fn3-like"/>
</dbReference>
<dbReference type="InterPro" id="IPR002772">
    <property type="entry name" value="Glyco_hydro_3_C"/>
</dbReference>
<dbReference type="InterPro" id="IPR036881">
    <property type="entry name" value="Glyco_hydro_3_C_sf"/>
</dbReference>
<dbReference type="InterPro" id="IPR001764">
    <property type="entry name" value="Glyco_hydro_3_N"/>
</dbReference>
<dbReference type="InterPro" id="IPR036962">
    <property type="entry name" value="Glyco_hydro_3_N_sf"/>
</dbReference>
<dbReference type="InterPro" id="IPR017853">
    <property type="entry name" value="Glycoside_hydrolase_SF"/>
</dbReference>
<dbReference type="InterPro" id="IPR013783">
    <property type="entry name" value="Ig-like_fold"/>
</dbReference>
<dbReference type="PANTHER" id="PTHR42715">
    <property type="entry name" value="BETA-GLUCOSIDASE"/>
    <property type="match status" value="1"/>
</dbReference>
<dbReference type="PANTHER" id="PTHR42715:SF20">
    <property type="entry name" value="BETA-GLUCOSIDASE E-RELATED"/>
    <property type="match status" value="1"/>
</dbReference>
<dbReference type="Pfam" id="PF14310">
    <property type="entry name" value="Fn3-like"/>
    <property type="match status" value="1"/>
</dbReference>
<dbReference type="Pfam" id="PF00933">
    <property type="entry name" value="Glyco_hydro_3"/>
    <property type="match status" value="1"/>
</dbReference>
<dbReference type="Pfam" id="PF01915">
    <property type="entry name" value="Glyco_hydro_3_C"/>
    <property type="match status" value="1"/>
</dbReference>
<dbReference type="PRINTS" id="PR00133">
    <property type="entry name" value="GLHYDRLASE3"/>
</dbReference>
<dbReference type="SMART" id="SM01217">
    <property type="entry name" value="Fn3_like"/>
    <property type="match status" value="1"/>
</dbReference>
<dbReference type="SUPFAM" id="SSF51445">
    <property type="entry name" value="(Trans)glycosidases"/>
    <property type="match status" value="1"/>
</dbReference>
<dbReference type="SUPFAM" id="SSF52279">
    <property type="entry name" value="Beta-D-glucan exohydrolase, C-terminal domain"/>
    <property type="match status" value="1"/>
</dbReference>